<accession>A9NGG3</accession>
<name>APT_ACHLI</name>
<comment type="function">
    <text evidence="1">Catalyzes a salvage reaction resulting in the formation of AMP, that is energically less costly than de novo synthesis.</text>
</comment>
<comment type="catalytic activity">
    <reaction evidence="1">
        <text>AMP + diphosphate = 5-phospho-alpha-D-ribose 1-diphosphate + adenine</text>
        <dbReference type="Rhea" id="RHEA:16609"/>
        <dbReference type="ChEBI" id="CHEBI:16708"/>
        <dbReference type="ChEBI" id="CHEBI:33019"/>
        <dbReference type="ChEBI" id="CHEBI:58017"/>
        <dbReference type="ChEBI" id="CHEBI:456215"/>
        <dbReference type="EC" id="2.4.2.7"/>
    </reaction>
</comment>
<comment type="pathway">
    <text evidence="1">Purine metabolism; AMP biosynthesis via salvage pathway; AMP from adenine: step 1/1.</text>
</comment>
<comment type="subunit">
    <text evidence="1">Homodimer.</text>
</comment>
<comment type="subcellular location">
    <subcellularLocation>
        <location evidence="1">Cytoplasm</location>
    </subcellularLocation>
</comment>
<comment type="similarity">
    <text evidence="1">Belongs to the purine/pyrimidine phosphoribosyltransferase family.</text>
</comment>
<gene>
    <name evidence="1" type="primary">apt</name>
    <name type="ordered locus">ACL_0829</name>
</gene>
<dbReference type="EC" id="2.4.2.7" evidence="1"/>
<dbReference type="EMBL" id="CP000896">
    <property type="protein sequence ID" value="ABX81443.1"/>
    <property type="molecule type" value="Genomic_DNA"/>
</dbReference>
<dbReference type="SMR" id="A9NGG3"/>
<dbReference type="STRING" id="441768.ACL_0829"/>
<dbReference type="KEGG" id="acl:ACL_0829"/>
<dbReference type="eggNOG" id="COG0503">
    <property type="taxonomic scope" value="Bacteria"/>
</dbReference>
<dbReference type="HOGENOM" id="CLU_063339_3_0_14"/>
<dbReference type="OrthoDB" id="9803963at2"/>
<dbReference type="UniPathway" id="UPA00588">
    <property type="reaction ID" value="UER00646"/>
</dbReference>
<dbReference type="Proteomes" id="UP000008558">
    <property type="component" value="Chromosome"/>
</dbReference>
<dbReference type="GO" id="GO:0005737">
    <property type="term" value="C:cytoplasm"/>
    <property type="evidence" value="ECO:0007669"/>
    <property type="project" value="UniProtKB-SubCell"/>
</dbReference>
<dbReference type="GO" id="GO:0002055">
    <property type="term" value="F:adenine binding"/>
    <property type="evidence" value="ECO:0007669"/>
    <property type="project" value="TreeGrafter"/>
</dbReference>
<dbReference type="GO" id="GO:0003999">
    <property type="term" value="F:adenine phosphoribosyltransferase activity"/>
    <property type="evidence" value="ECO:0007669"/>
    <property type="project" value="UniProtKB-UniRule"/>
</dbReference>
<dbReference type="GO" id="GO:0016208">
    <property type="term" value="F:AMP binding"/>
    <property type="evidence" value="ECO:0007669"/>
    <property type="project" value="TreeGrafter"/>
</dbReference>
<dbReference type="GO" id="GO:0006168">
    <property type="term" value="P:adenine salvage"/>
    <property type="evidence" value="ECO:0007669"/>
    <property type="project" value="InterPro"/>
</dbReference>
<dbReference type="GO" id="GO:0044209">
    <property type="term" value="P:AMP salvage"/>
    <property type="evidence" value="ECO:0007669"/>
    <property type="project" value="UniProtKB-UniRule"/>
</dbReference>
<dbReference type="GO" id="GO:0006166">
    <property type="term" value="P:purine ribonucleoside salvage"/>
    <property type="evidence" value="ECO:0007669"/>
    <property type="project" value="UniProtKB-KW"/>
</dbReference>
<dbReference type="CDD" id="cd06223">
    <property type="entry name" value="PRTases_typeI"/>
    <property type="match status" value="1"/>
</dbReference>
<dbReference type="FunFam" id="3.40.50.2020:FF:000004">
    <property type="entry name" value="Adenine phosphoribosyltransferase"/>
    <property type="match status" value="1"/>
</dbReference>
<dbReference type="Gene3D" id="3.40.50.2020">
    <property type="match status" value="1"/>
</dbReference>
<dbReference type="HAMAP" id="MF_00004">
    <property type="entry name" value="Aden_phosphoribosyltr"/>
    <property type="match status" value="1"/>
</dbReference>
<dbReference type="InterPro" id="IPR005764">
    <property type="entry name" value="Ade_phspho_trans"/>
</dbReference>
<dbReference type="InterPro" id="IPR000836">
    <property type="entry name" value="PRibTrfase_dom"/>
</dbReference>
<dbReference type="InterPro" id="IPR029057">
    <property type="entry name" value="PRTase-like"/>
</dbReference>
<dbReference type="InterPro" id="IPR050054">
    <property type="entry name" value="UPRTase/APRTase"/>
</dbReference>
<dbReference type="NCBIfam" id="TIGR01090">
    <property type="entry name" value="apt"/>
    <property type="match status" value="1"/>
</dbReference>
<dbReference type="NCBIfam" id="NF002633">
    <property type="entry name" value="PRK02304.1-2"/>
    <property type="match status" value="1"/>
</dbReference>
<dbReference type="NCBIfam" id="NF002634">
    <property type="entry name" value="PRK02304.1-3"/>
    <property type="match status" value="1"/>
</dbReference>
<dbReference type="NCBIfam" id="NF002636">
    <property type="entry name" value="PRK02304.1-5"/>
    <property type="match status" value="1"/>
</dbReference>
<dbReference type="PANTHER" id="PTHR32315">
    <property type="entry name" value="ADENINE PHOSPHORIBOSYLTRANSFERASE"/>
    <property type="match status" value="1"/>
</dbReference>
<dbReference type="PANTHER" id="PTHR32315:SF3">
    <property type="entry name" value="ADENINE PHOSPHORIBOSYLTRANSFERASE"/>
    <property type="match status" value="1"/>
</dbReference>
<dbReference type="Pfam" id="PF00156">
    <property type="entry name" value="Pribosyltran"/>
    <property type="match status" value="1"/>
</dbReference>
<dbReference type="SUPFAM" id="SSF53271">
    <property type="entry name" value="PRTase-like"/>
    <property type="match status" value="1"/>
</dbReference>
<dbReference type="PROSITE" id="PS00103">
    <property type="entry name" value="PUR_PYR_PR_TRANSFER"/>
    <property type="match status" value="1"/>
</dbReference>
<feature type="chain" id="PRO_0000329335" description="Adenine phosphoribosyltransferase">
    <location>
        <begin position="1"/>
        <end position="170"/>
    </location>
</feature>
<evidence type="ECO:0000255" key="1">
    <source>
        <dbReference type="HAMAP-Rule" id="MF_00004"/>
    </source>
</evidence>
<keyword id="KW-0963">Cytoplasm</keyword>
<keyword id="KW-0328">Glycosyltransferase</keyword>
<keyword id="KW-0660">Purine salvage</keyword>
<keyword id="KW-1185">Reference proteome</keyword>
<keyword id="KW-0808">Transferase</keyword>
<reference key="1">
    <citation type="journal article" date="2011" name="J. Bacteriol.">
        <title>Complete genome and proteome of Acholeplasma laidlawii.</title>
        <authorList>
            <person name="Lazarev V.N."/>
            <person name="Levitskii S.A."/>
            <person name="Basovskii Y.I."/>
            <person name="Chukin M.M."/>
            <person name="Akopian T.A."/>
            <person name="Vereshchagin V.V."/>
            <person name="Kostrjukova E.S."/>
            <person name="Kovaleva G.Y."/>
            <person name="Kazanov M.D."/>
            <person name="Malko D.B."/>
            <person name="Vitreschak A.G."/>
            <person name="Sernova N.V."/>
            <person name="Gelfand M.S."/>
            <person name="Demina I.A."/>
            <person name="Serebryakova M.V."/>
            <person name="Galyamina M.A."/>
            <person name="Vtyurin N.N."/>
            <person name="Rogov S.I."/>
            <person name="Alexeev D.G."/>
            <person name="Ladygina V.G."/>
            <person name="Govorun V.M."/>
        </authorList>
    </citation>
    <scope>NUCLEOTIDE SEQUENCE [LARGE SCALE GENOMIC DNA]</scope>
    <source>
        <strain>PG-8A</strain>
    </source>
</reference>
<organism>
    <name type="scientific">Acholeplasma laidlawii (strain PG-8A)</name>
    <dbReference type="NCBI Taxonomy" id="441768"/>
    <lineage>
        <taxon>Bacteria</taxon>
        <taxon>Bacillati</taxon>
        <taxon>Mycoplasmatota</taxon>
        <taxon>Mollicutes</taxon>
        <taxon>Acholeplasmatales</taxon>
        <taxon>Acholeplasmataceae</taxon>
        <taxon>Acholeplasma</taxon>
    </lineage>
</organism>
<protein>
    <recommendedName>
        <fullName evidence="1">Adenine phosphoribosyltransferase</fullName>
        <shortName evidence="1">APRT</shortName>
        <ecNumber evidence="1">2.4.2.7</ecNumber>
    </recommendedName>
</protein>
<proteinExistence type="inferred from homology"/>
<sequence>MDLKAHIAAVKDFPKEGILFRDITPLMLDGKAFKYASDQFTEFARSKKADLIVGPEARGFIFGCPVAVNLGVGFAPVRKPGKLPRASVTVSYDLEYGSNSLSLHEDAVKPGQRVVIIDDLLATGGTMQATVELVEKLGGIVVGLAFLIELDDLEGRKLLKNYDVKTLINY</sequence>